<sequence>MRDKIKLESGAGTGHFYTTTKNKRTMPGKLEIKKFDPVARKHVVYKETKLK</sequence>
<reference key="1">
    <citation type="submission" date="2003-03" db="EMBL/GenBank/DDBJ databases">
        <title>The complete genome sequence of Neisseria gonorrhoeae.</title>
        <authorList>
            <person name="Lewis L.A."/>
            <person name="Gillaspy A.F."/>
            <person name="McLaughlin R.E."/>
            <person name="Gipson M."/>
            <person name="Ducey T.F."/>
            <person name="Ownbey T."/>
            <person name="Hartman K."/>
            <person name="Nydick C."/>
            <person name="Carson M.B."/>
            <person name="Vaughn J."/>
            <person name="Thomson C."/>
            <person name="Song L."/>
            <person name="Lin S."/>
            <person name="Yuan X."/>
            <person name="Najar F."/>
            <person name="Zhan M."/>
            <person name="Ren Q."/>
            <person name="Zhu H."/>
            <person name="Qi S."/>
            <person name="Kenton S.M."/>
            <person name="Lai H."/>
            <person name="White J.D."/>
            <person name="Clifton S."/>
            <person name="Roe B.A."/>
            <person name="Dyer D.W."/>
        </authorList>
    </citation>
    <scope>NUCLEOTIDE SEQUENCE [LARGE SCALE GENOMIC DNA]</scope>
    <source>
        <strain>ATCC 700825 / FA 1090</strain>
    </source>
</reference>
<evidence type="ECO:0000255" key="1">
    <source>
        <dbReference type="HAMAP-Rule" id="MF_00294"/>
    </source>
</evidence>
<evidence type="ECO:0000256" key="2">
    <source>
        <dbReference type="SAM" id="MobiDB-lite"/>
    </source>
</evidence>
<evidence type="ECO:0000305" key="3"/>
<accession>Q5F683</accession>
<gene>
    <name evidence="1" type="primary">rpmG</name>
    <name type="ordered locus">NGO_1679</name>
</gene>
<keyword id="KW-1185">Reference proteome</keyword>
<keyword id="KW-0687">Ribonucleoprotein</keyword>
<keyword id="KW-0689">Ribosomal protein</keyword>
<comment type="similarity">
    <text evidence="1">Belongs to the bacterial ribosomal protein bL33 family.</text>
</comment>
<feature type="chain" id="PRO_0000356581" description="Large ribosomal subunit protein bL33">
    <location>
        <begin position="1"/>
        <end position="51"/>
    </location>
</feature>
<feature type="region of interest" description="Disordered" evidence="2">
    <location>
        <begin position="1"/>
        <end position="21"/>
    </location>
</feature>
<organism>
    <name type="scientific">Neisseria gonorrhoeae (strain ATCC 700825 / FA 1090)</name>
    <dbReference type="NCBI Taxonomy" id="242231"/>
    <lineage>
        <taxon>Bacteria</taxon>
        <taxon>Pseudomonadati</taxon>
        <taxon>Pseudomonadota</taxon>
        <taxon>Betaproteobacteria</taxon>
        <taxon>Neisseriales</taxon>
        <taxon>Neisseriaceae</taxon>
        <taxon>Neisseria</taxon>
    </lineage>
</organism>
<proteinExistence type="inferred from homology"/>
<protein>
    <recommendedName>
        <fullName evidence="1">Large ribosomal subunit protein bL33</fullName>
    </recommendedName>
    <alternativeName>
        <fullName evidence="3">50S ribosomal protein L33</fullName>
    </alternativeName>
</protein>
<name>RL33_NEIG1</name>
<dbReference type="EMBL" id="AE004969">
    <property type="protein sequence ID" value="AAW90304.1"/>
    <property type="molecule type" value="Genomic_DNA"/>
</dbReference>
<dbReference type="RefSeq" id="WP_003689824.1">
    <property type="nucleotide sequence ID" value="NC_002946.2"/>
</dbReference>
<dbReference type="RefSeq" id="YP_208716.1">
    <property type="nucleotide sequence ID" value="NC_002946.2"/>
</dbReference>
<dbReference type="SMR" id="Q5F683"/>
<dbReference type="STRING" id="242231.NGO_1679"/>
<dbReference type="GeneID" id="66753961"/>
<dbReference type="KEGG" id="ngo:NGO_1679"/>
<dbReference type="PATRIC" id="fig|242231.10.peg.2002"/>
<dbReference type="HOGENOM" id="CLU_190949_1_1_4"/>
<dbReference type="Proteomes" id="UP000000535">
    <property type="component" value="Chromosome"/>
</dbReference>
<dbReference type="GO" id="GO:0022625">
    <property type="term" value="C:cytosolic large ribosomal subunit"/>
    <property type="evidence" value="ECO:0007669"/>
    <property type="project" value="TreeGrafter"/>
</dbReference>
<dbReference type="GO" id="GO:0003735">
    <property type="term" value="F:structural constituent of ribosome"/>
    <property type="evidence" value="ECO:0007669"/>
    <property type="project" value="InterPro"/>
</dbReference>
<dbReference type="GO" id="GO:0006412">
    <property type="term" value="P:translation"/>
    <property type="evidence" value="ECO:0007669"/>
    <property type="project" value="UniProtKB-UniRule"/>
</dbReference>
<dbReference type="FunFam" id="2.20.28.120:FF:000001">
    <property type="entry name" value="50S ribosomal protein L33"/>
    <property type="match status" value="1"/>
</dbReference>
<dbReference type="Gene3D" id="2.20.28.120">
    <property type="entry name" value="Ribosomal protein L33"/>
    <property type="match status" value="1"/>
</dbReference>
<dbReference type="HAMAP" id="MF_00294">
    <property type="entry name" value="Ribosomal_bL33"/>
    <property type="match status" value="1"/>
</dbReference>
<dbReference type="InterPro" id="IPR001705">
    <property type="entry name" value="Ribosomal_bL33"/>
</dbReference>
<dbReference type="InterPro" id="IPR018264">
    <property type="entry name" value="Ribosomal_bL33_CS"/>
</dbReference>
<dbReference type="InterPro" id="IPR038584">
    <property type="entry name" value="Ribosomal_bL33_sf"/>
</dbReference>
<dbReference type="InterPro" id="IPR011332">
    <property type="entry name" value="Ribosomal_zn-bd"/>
</dbReference>
<dbReference type="NCBIfam" id="NF001860">
    <property type="entry name" value="PRK00595.1"/>
    <property type="match status" value="1"/>
</dbReference>
<dbReference type="NCBIfam" id="TIGR01023">
    <property type="entry name" value="rpmG_bact"/>
    <property type="match status" value="1"/>
</dbReference>
<dbReference type="PANTHER" id="PTHR15238">
    <property type="entry name" value="54S RIBOSOMAL PROTEIN L39, MITOCHONDRIAL"/>
    <property type="match status" value="1"/>
</dbReference>
<dbReference type="PANTHER" id="PTHR15238:SF1">
    <property type="entry name" value="LARGE RIBOSOMAL SUBUNIT PROTEIN BL33M"/>
    <property type="match status" value="1"/>
</dbReference>
<dbReference type="Pfam" id="PF00471">
    <property type="entry name" value="Ribosomal_L33"/>
    <property type="match status" value="1"/>
</dbReference>
<dbReference type="SUPFAM" id="SSF57829">
    <property type="entry name" value="Zn-binding ribosomal proteins"/>
    <property type="match status" value="1"/>
</dbReference>
<dbReference type="PROSITE" id="PS00582">
    <property type="entry name" value="RIBOSOMAL_L33"/>
    <property type="match status" value="1"/>
</dbReference>